<feature type="chain" id="PRO_0000212132" description="2,3-bisphosphoglycerate-independent phosphoglycerate mutase">
    <location>
        <begin position="1"/>
        <end position="504"/>
    </location>
</feature>
<feature type="active site" description="Phosphoserine intermediate" evidence="1">
    <location>
        <position position="61"/>
    </location>
</feature>
<feature type="binding site" evidence="1">
    <location>
        <position position="11"/>
    </location>
    <ligand>
        <name>Mn(2+)</name>
        <dbReference type="ChEBI" id="CHEBI:29035"/>
        <label>2</label>
    </ligand>
</feature>
<feature type="binding site" evidence="1">
    <location>
        <position position="61"/>
    </location>
    <ligand>
        <name>Mn(2+)</name>
        <dbReference type="ChEBI" id="CHEBI:29035"/>
        <label>2</label>
    </ligand>
</feature>
<feature type="binding site" evidence="1">
    <location>
        <position position="122"/>
    </location>
    <ligand>
        <name>substrate</name>
    </ligand>
</feature>
<feature type="binding site" evidence="1">
    <location>
        <begin position="152"/>
        <end position="153"/>
    </location>
    <ligand>
        <name>substrate</name>
    </ligand>
</feature>
<feature type="binding site" evidence="1">
    <location>
        <position position="183"/>
    </location>
    <ligand>
        <name>substrate</name>
    </ligand>
</feature>
<feature type="binding site" evidence="1">
    <location>
        <position position="189"/>
    </location>
    <ligand>
        <name>substrate</name>
    </ligand>
</feature>
<feature type="binding site" evidence="1">
    <location>
        <begin position="255"/>
        <end position="258"/>
    </location>
    <ligand>
        <name>substrate</name>
    </ligand>
</feature>
<feature type="binding site" evidence="1">
    <location>
        <position position="329"/>
    </location>
    <ligand>
        <name>substrate</name>
    </ligand>
</feature>
<feature type="binding site" evidence="1">
    <location>
        <position position="396"/>
    </location>
    <ligand>
        <name>Mn(2+)</name>
        <dbReference type="ChEBI" id="CHEBI:29035"/>
        <label>1</label>
    </ligand>
</feature>
<feature type="binding site" evidence="1">
    <location>
        <position position="400"/>
    </location>
    <ligand>
        <name>Mn(2+)</name>
        <dbReference type="ChEBI" id="CHEBI:29035"/>
        <label>1</label>
    </ligand>
</feature>
<feature type="binding site" evidence="1">
    <location>
        <position position="437"/>
    </location>
    <ligand>
        <name>Mn(2+)</name>
        <dbReference type="ChEBI" id="CHEBI:29035"/>
        <label>2</label>
    </ligand>
</feature>
<feature type="binding site" evidence="1">
    <location>
        <position position="438"/>
    </location>
    <ligand>
        <name>Mn(2+)</name>
        <dbReference type="ChEBI" id="CHEBI:29035"/>
        <label>2</label>
    </ligand>
</feature>
<feature type="binding site" evidence="1">
    <location>
        <position position="455"/>
    </location>
    <ligand>
        <name>Mn(2+)</name>
        <dbReference type="ChEBI" id="CHEBI:29035"/>
        <label>1</label>
    </ligand>
</feature>
<proteinExistence type="inferred from homology"/>
<evidence type="ECO:0000255" key="1">
    <source>
        <dbReference type="HAMAP-Rule" id="MF_01038"/>
    </source>
</evidence>
<protein>
    <recommendedName>
        <fullName evidence="1">2,3-bisphosphoglycerate-independent phosphoglycerate mutase</fullName>
        <shortName evidence="1">BPG-independent PGAM</shortName>
        <shortName evidence="1">Phosphoglyceromutase</shortName>
        <shortName evidence="1">iPGM</shortName>
        <ecNumber evidence="1">5.4.2.12</ecNumber>
    </recommendedName>
</protein>
<keyword id="KW-0324">Glycolysis</keyword>
<keyword id="KW-0413">Isomerase</keyword>
<keyword id="KW-0464">Manganese</keyword>
<keyword id="KW-0479">Metal-binding</keyword>
<keyword id="KW-1185">Reference proteome</keyword>
<gene>
    <name evidence="1" type="primary">gpmI</name>
    <name type="ordered locus">BT_3419</name>
</gene>
<reference key="1">
    <citation type="journal article" date="2003" name="Science">
        <title>A genomic view of the human-Bacteroides thetaiotaomicron symbiosis.</title>
        <authorList>
            <person name="Xu J."/>
            <person name="Bjursell M.K."/>
            <person name="Himrod J."/>
            <person name="Deng S."/>
            <person name="Carmichael L.K."/>
            <person name="Chiang H.C."/>
            <person name="Hooper L.V."/>
            <person name="Gordon J.I."/>
        </authorList>
    </citation>
    <scope>NUCLEOTIDE SEQUENCE [LARGE SCALE GENOMIC DNA]</scope>
    <source>
        <strain>ATCC 29148 / DSM 2079 / JCM 5827 / CCUG 10774 / NCTC 10582 / VPI-5482 / E50</strain>
    </source>
</reference>
<sequence length="504" mass="55646">MSKKALLMILDGWGLGDQKKDDVIFNTPTPYWDYLMNNYPHSQLQASGENVGLPDGQMGNSEVGHLNIGAGRVVYQDLVKINRACADNSILQNPEIVSAFSYAKENGKSVHFMGLTSNGGVHSSMVHLFKLCDISKEYGIDNTFIHCFMDGRDTDPKSGKGFIEELSAHCEKSAGKIASIIGRYYAMDRDKRWERVKEAYDLLVNGQGKKATDMVQAMQESYDEGVTDEFIKPIVNANCDGTIKEGDVVIFFNYRNDRAKELTVVLTQQDMPEAGMHTIPGLQYYCMTPYDASFKGVHILFDKENVANTLGEYIASKGLNQLHIAETEKYAHVTFFFNGGRETPFDNEDRILVPSPKVATYDLKPEMSAYEVKDKLVDAINENKYDFIVVNFANGDMVGHTGIYEAIEKAVVAVDACVKDVIEAAKAQDYEAIIIADHGNADRALNEDGTPNTAHSLNPVPCVYVTGNKAAKVEDGRLADVAPTILKIMGLEAPADMNGQILIK</sequence>
<organism>
    <name type="scientific">Bacteroides thetaiotaomicron (strain ATCC 29148 / DSM 2079 / JCM 5827 / CCUG 10774 / NCTC 10582 / VPI-5482 / E50)</name>
    <dbReference type="NCBI Taxonomy" id="226186"/>
    <lineage>
        <taxon>Bacteria</taxon>
        <taxon>Pseudomonadati</taxon>
        <taxon>Bacteroidota</taxon>
        <taxon>Bacteroidia</taxon>
        <taxon>Bacteroidales</taxon>
        <taxon>Bacteroidaceae</taxon>
        <taxon>Bacteroides</taxon>
    </lineage>
</organism>
<accession>Q8A287</accession>
<name>GPMI_BACTN</name>
<comment type="function">
    <text evidence="1">Catalyzes the interconversion of 2-phosphoglycerate and 3-phosphoglycerate.</text>
</comment>
<comment type="catalytic activity">
    <reaction evidence="1">
        <text>(2R)-2-phosphoglycerate = (2R)-3-phosphoglycerate</text>
        <dbReference type="Rhea" id="RHEA:15901"/>
        <dbReference type="ChEBI" id="CHEBI:58272"/>
        <dbReference type="ChEBI" id="CHEBI:58289"/>
        <dbReference type="EC" id="5.4.2.12"/>
    </reaction>
</comment>
<comment type="cofactor">
    <cofactor evidence="1">
        <name>Mn(2+)</name>
        <dbReference type="ChEBI" id="CHEBI:29035"/>
    </cofactor>
    <text evidence="1">Binds 2 manganese ions per subunit.</text>
</comment>
<comment type="pathway">
    <text evidence="1">Carbohydrate degradation; glycolysis; pyruvate from D-glyceraldehyde 3-phosphate: step 3/5.</text>
</comment>
<comment type="subunit">
    <text evidence="1">Monomer.</text>
</comment>
<comment type="similarity">
    <text evidence="1">Belongs to the BPG-independent phosphoglycerate mutase family.</text>
</comment>
<dbReference type="EC" id="5.4.2.12" evidence="1"/>
<dbReference type="EMBL" id="AE015928">
    <property type="protein sequence ID" value="AAO78525.1"/>
    <property type="molecule type" value="Genomic_DNA"/>
</dbReference>
<dbReference type="RefSeq" id="NP_812331.1">
    <property type="nucleotide sequence ID" value="NC_004663.1"/>
</dbReference>
<dbReference type="RefSeq" id="WP_011108817.1">
    <property type="nucleotide sequence ID" value="NC_004663.1"/>
</dbReference>
<dbReference type="SMR" id="Q8A287"/>
<dbReference type="FunCoup" id="Q8A287">
    <property type="interactions" value="408"/>
</dbReference>
<dbReference type="STRING" id="226186.BT_3419"/>
<dbReference type="PaxDb" id="226186-BT_3419"/>
<dbReference type="EnsemblBacteria" id="AAO78525">
    <property type="protein sequence ID" value="AAO78525"/>
    <property type="gene ID" value="BT_3419"/>
</dbReference>
<dbReference type="GeneID" id="60924598"/>
<dbReference type="KEGG" id="bth:BT_3419"/>
<dbReference type="PATRIC" id="fig|226186.12.peg.3486"/>
<dbReference type="eggNOG" id="COG0696">
    <property type="taxonomic scope" value="Bacteria"/>
</dbReference>
<dbReference type="HOGENOM" id="CLU_026099_2_0_10"/>
<dbReference type="InParanoid" id="Q8A287"/>
<dbReference type="OrthoDB" id="9800863at2"/>
<dbReference type="UniPathway" id="UPA00109">
    <property type="reaction ID" value="UER00186"/>
</dbReference>
<dbReference type="Proteomes" id="UP000001414">
    <property type="component" value="Chromosome"/>
</dbReference>
<dbReference type="GO" id="GO:0005829">
    <property type="term" value="C:cytosol"/>
    <property type="evidence" value="ECO:0000318"/>
    <property type="project" value="GO_Central"/>
</dbReference>
<dbReference type="GO" id="GO:0030145">
    <property type="term" value="F:manganese ion binding"/>
    <property type="evidence" value="ECO:0000318"/>
    <property type="project" value="GO_Central"/>
</dbReference>
<dbReference type="GO" id="GO:0004619">
    <property type="term" value="F:phosphoglycerate mutase activity"/>
    <property type="evidence" value="ECO:0000318"/>
    <property type="project" value="GO_Central"/>
</dbReference>
<dbReference type="GO" id="GO:0005975">
    <property type="term" value="P:carbohydrate metabolic process"/>
    <property type="evidence" value="ECO:0000318"/>
    <property type="project" value="GO_Central"/>
</dbReference>
<dbReference type="GO" id="GO:0006007">
    <property type="term" value="P:glucose catabolic process"/>
    <property type="evidence" value="ECO:0007669"/>
    <property type="project" value="InterPro"/>
</dbReference>
<dbReference type="GO" id="GO:0006096">
    <property type="term" value="P:glycolytic process"/>
    <property type="evidence" value="ECO:0007669"/>
    <property type="project" value="UniProtKB-UniRule"/>
</dbReference>
<dbReference type="CDD" id="cd16010">
    <property type="entry name" value="iPGM"/>
    <property type="match status" value="1"/>
</dbReference>
<dbReference type="FunFam" id="3.40.1450.10:FF:000002">
    <property type="entry name" value="2,3-bisphosphoglycerate-independent phosphoglycerate mutase"/>
    <property type="match status" value="1"/>
</dbReference>
<dbReference type="FunFam" id="3.40.720.10:FF:000001">
    <property type="entry name" value="2,3-bisphosphoglycerate-independent phosphoglycerate mutase"/>
    <property type="match status" value="1"/>
</dbReference>
<dbReference type="Gene3D" id="3.40.720.10">
    <property type="entry name" value="Alkaline Phosphatase, subunit A"/>
    <property type="match status" value="1"/>
</dbReference>
<dbReference type="Gene3D" id="3.40.1450.10">
    <property type="entry name" value="BPG-independent phosphoglycerate mutase, domain B"/>
    <property type="match status" value="1"/>
</dbReference>
<dbReference type="HAMAP" id="MF_01038">
    <property type="entry name" value="GpmI"/>
    <property type="match status" value="1"/>
</dbReference>
<dbReference type="InterPro" id="IPR017850">
    <property type="entry name" value="Alkaline_phosphatase_core_sf"/>
</dbReference>
<dbReference type="InterPro" id="IPR011258">
    <property type="entry name" value="BPG-indep_PGM_N"/>
</dbReference>
<dbReference type="InterPro" id="IPR006124">
    <property type="entry name" value="Metalloenzyme"/>
</dbReference>
<dbReference type="InterPro" id="IPR036646">
    <property type="entry name" value="PGAM_B_sf"/>
</dbReference>
<dbReference type="InterPro" id="IPR005995">
    <property type="entry name" value="Pgm_bpd_ind"/>
</dbReference>
<dbReference type="NCBIfam" id="TIGR01307">
    <property type="entry name" value="pgm_bpd_ind"/>
    <property type="match status" value="1"/>
</dbReference>
<dbReference type="PANTHER" id="PTHR31637">
    <property type="entry name" value="2,3-BISPHOSPHOGLYCERATE-INDEPENDENT PHOSPHOGLYCERATE MUTASE"/>
    <property type="match status" value="1"/>
</dbReference>
<dbReference type="PANTHER" id="PTHR31637:SF0">
    <property type="entry name" value="2,3-BISPHOSPHOGLYCERATE-INDEPENDENT PHOSPHOGLYCERATE MUTASE"/>
    <property type="match status" value="1"/>
</dbReference>
<dbReference type="Pfam" id="PF06415">
    <property type="entry name" value="iPGM_N"/>
    <property type="match status" value="1"/>
</dbReference>
<dbReference type="Pfam" id="PF01676">
    <property type="entry name" value="Metalloenzyme"/>
    <property type="match status" value="1"/>
</dbReference>
<dbReference type="PIRSF" id="PIRSF001492">
    <property type="entry name" value="IPGAM"/>
    <property type="match status" value="1"/>
</dbReference>
<dbReference type="SUPFAM" id="SSF64158">
    <property type="entry name" value="2,3-Bisphosphoglycerate-independent phosphoglycerate mutase, substrate-binding domain"/>
    <property type="match status" value="1"/>
</dbReference>
<dbReference type="SUPFAM" id="SSF53649">
    <property type="entry name" value="Alkaline phosphatase-like"/>
    <property type="match status" value="1"/>
</dbReference>